<feature type="chain" id="PRO_0000200644" description="Protein Wnt-7">
    <location>
        <begin position="1" status="less than"/>
        <end position="123" status="greater than"/>
    </location>
</feature>
<feature type="lipid moiety-binding region" description="O-palmitoleoyl serine; by PORCN" evidence="3">
    <location>
        <position position="1"/>
    </location>
</feature>
<feature type="glycosylation site" description="N-linked (GlcNAc...) asparagine" evidence="4">
    <location>
        <position position="79"/>
    </location>
</feature>
<feature type="glycosylation site" description="N-linked (GlcNAc...) asparagine" evidence="4">
    <location>
        <position position="90"/>
    </location>
</feature>
<feature type="disulfide bond" evidence="2">
    <location>
        <begin position="89"/>
        <end position="104"/>
    </location>
</feature>
<feature type="non-terminal residue">
    <location>
        <position position="1"/>
    </location>
</feature>
<feature type="non-terminal residue">
    <location>
        <position position="123"/>
    </location>
</feature>
<accession>P28098</accession>
<sequence length="123" mass="14332">SGSCTTKTCWTMLPNFRSVGDVLKEKYERTLQVEPVKAKRTRRPTFLKVKDSENYRKPRLSHLVFLHRSPNYCEFDENNGSMGTVGRRCNRTSTSTDSCDLMCCGRGYNTHQYTKIWQCNCKF</sequence>
<organism>
    <name type="scientific">Strongylocentrotus purpuratus</name>
    <name type="common">Purple sea urchin</name>
    <dbReference type="NCBI Taxonomy" id="7668"/>
    <lineage>
        <taxon>Eukaryota</taxon>
        <taxon>Metazoa</taxon>
        <taxon>Echinodermata</taxon>
        <taxon>Eleutherozoa</taxon>
        <taxon>Echinozoa</taxon>
        <taxon>Echinoidea</taxon>
        <taxon>Euechinoidea</taxon>
        <taxon>Echinacea</taxon>
        <taxon>Camarodonta</taxon>
        <taxon>Echinidea</taxon>
        <taxon>Strongylocentrotidae</taxon>
        <taxon>Strongylocentrotus</taxon>
    </lineage>
</organism>
<evidence type="ECO:0000250" key="1">
    <source>
        <dbReference type="UniProtKB" id="P27467"/>
    </source>
</evidence>
<evidence type="ECO:0000250" key="2">
    <source>
        <dbReference type="UniProtKB" id="P28026"/>
    </source>
</evidence>
<evidence type="ECO:0000250" key="3">
    <source>
        <dbReference type="UniProtKB" id="P56704"/>
    </source>
</evidence>
<evidence type="ECO:0000255" key="4"/>
<evidence type="ECO:0000305" key="5"/>
<dbReference type="EMBL" id="M91305">
    <property type="protein sequence ID" value="AAA30087.1"/>
    <property type="molecule type" value="Genomic_DNA"/>
</dbReference>
<dbReference type="SMR" id="P28098"/>
<dbReference type="STRING" id="7668.P28098"/>
<dbReference type="GlyCosmos" id="P28098">
    <property type="glycosylation" value="2 sites, No reported glycans"/>
</dbReference>
<dbReference type="eggNOG" id="KOG3913">
    <property type="taxonomic scope" value="Eukaryota"/>
</dbReference>
<dbReference type="HOGENOM" id="CLU_033039_1_4_1"/>
<dbReference type="InParanoid" id="P28098"/>
<dbReference type="Proteomes" id="UP000007110">
    <property type="component" value="Unassembled WGS sequence"/>
</dbReference>
<dbReference type="GO" id="GO:0005576">
    <property type="term" value="C:extracellular region"/>
    <property type="evidence" value="ECO:0007669"/>
    <property type="project" value="UniProtKB-KW"/>
</dbReference>
<dbReference type="GO" id="GO:0005102">
    <property type="term" value="F:signaling receptor binding"/>
    <property type="evidence" value="ECO:0007669"/>
    <property type="project" value="InterPro"/>
</dbReference>
<dbReference type="GO" id="GO:0016055">
    <property type="term" value="P:Wnt signaling pathway"/>
    <property type="evidence" value="ECO:0007669"/>
    <property type="project" value="UniProtKB-KW"/>
</dbReference>
<dbReference type="Gene3D" id="3.30.2460.20">
    <property type="match status" value="1"/>
</dbReference>
<dbReference type="InterPro" id="IPR005817">
    <property type="entry name" value="Wnt"/>
</dbReference>
<dbReference type="InterPro" id="IPR043158">
    <property type="entry name" value="Wnt_C"/>
</dbReference>
<dbReference type="PANTHER" id="PTHR12027:SF112">
    <property type="entry name" value="PROTEIN WNT-2"/>
    <property type="match status" value="1"/>
</dbReference>
<dbReference type="PANTHER" id="PTHR12027">
    <property type="entry name" value="WNT RELATED"/>
    <property type="match status" value="1"/>
</dbReference>
<dbReference type="Pfam" id="PF00110">
    <property type="entry name" value="wnt"/>
    <property type="match status" value="1"/>
</dbReference>
<dbReference type="SMART" id="SM00097">
    <property type="entry name" value="WNT1"/>
    <property type="match status" value="1"/>
</dbReference>
<proteinExistence type="inferred from homology"/>
<protein>
    <recommendedName>
        <fullName>Protein Wnt-7</fullName>
    </recommendedName>
</protein>
<gene>
    <name type="primary">WNT-7</name>
</gene>
<comment type="function">
    <text>Ligand for members of the frizzled family of seven transmembrane receptors. Probable developmental protein. May be a signaling molecule which affects the development of discrete regions of tissues. Is likely to signal over only few cell diameters.</text>
</comment>
<comment type="subcellular location">
    <subcellularLocation>
        <location>Secreted</location>
        <location>Extracellular space</location>
        <location>Extracellular matrix</location>
    </subcellularLocation>
</comment>
<comment type="PTM">
    <text evidence="1 3">Palmitoleoylation is required for efficient binding to frizzled receptors. Depalmitoleoylation leads to Wnt signaling pathway inhibition.</text>
</comment>
<comment type="similarity">
    <text evidence="5">Belongs to the Wnt family.</text>
</comment>
<keyword id="KW-0217">Developmental protein</keyword>
<keyword id="KW-1015">Disulfide bond</keyword>
<keyword id="KW-0272">Extracellular matrix</keyword>
<keyword id="KW-0325">Glycoprotein</keyword>
<keyword id="KW-0449">Lipoprotein</keyword>
<keyword id="KW-1185">Reference proteome</keyword>
<keyword id="KW-0964">Secreted</keyword>
<keyword id="KW-0879">Wnt signaling pathway</keyword>
<name>WNT7_STRPU</name>
<reference key="1">
    <citation type="journal article" date="1992" name="Proc. Natl. Acad. Sci. U.S.A.">
        <title>Diversification of the Wnt gene family on the ancestral lineage of vertebrates.</title>
        <authorList>
            <person name="Sidow A."/>
        </authorList>
    </citation>
    <scope>NUCLEOTIDE SEQUENCE [GENOMIC DNA]</scope>
</reference>